<protein>
    <recommendedName>
        <fullName evidence="1">Glycerol kinase</fullName>
        <ecNumber evidence="1">2.7.1.30</ecNumber>
    </recommendedName>
    <alternativeName>
        <fullName evidence="1">ATP:glycerol 3-phosphotransferase</fullName>
    </alternativeName>
    <alternativeName>
        <fullName evidence="1">Glycerokinase</fullName>
        <shortName evidence="1">GK</shortName>
    </alternativeName>
</protein>
<organism>
    <name type="scientific">Ralstonia nicotianae (strain ATCC BAA-1114 / GMI1000)</name>
    <name type="common">Ralstonia solanacearum</name>
    <dbReference type="NCBI Taxonomy" id="267608"/>
    <lineage>
        <taxon>Bacteria</taxon>
        <taxon>Pseudomonadati</taxon>
        <taxon>Pseudomonadota</taxon>
        <taxon>Betaproteobacteria</taxon>
        <taxon>Burkholderiales</taxon>
        <taxon>Burkholderiaceae</taxon>
        <taxon>Ralstonia</taxon>
        <taxon>Ralstonia solanacearum species complex</taxon>
    </lineage>
</organism>
<dbReference type="EC" id="2.7.1.30" evidence="1"/>
<dbReference type="EMBL" id="AL646052">
    <property type="protein sequence ID" value="CAD16761.1"/>
    <property type="molecule type" value="Genomic_DNA"/>
</dbReference>
<dbReference type="RefSeq" id="WP_011002945.1">
    <property type="nucleotide sequence ID" value="NC_003295.1"/>
</dbReference>
<dbReference type="SMR" id="Q8XUY1"/>
<dbReference type="STRING" id="267608.RSc3052"/>
<dbReference type="EnsemblBacteria" id="CAD16761">
    <property type="protein sequence ID" value="CAD16761"/>
    <property type="gene ID" value="RSc3052"/>
</dbReference>
<dbReference type="KEGG" id="rso:RSc3052"/>
<dbReference type="eggNOG" id="COG0554">
    <property type="taxonomic scope" value="Bacteria"/>
</dbReference>
<dbReference type="HOGENOM" id="CLU_009281_2_3_4"/>
<dbReference type="UniPathway" id="UPA00618">
    <property type="reaction ID" value="UER00672"/>
</dbReference>
<dbReference type="Proteomes" id="UP000001436">
    <property type="component" value="Chromosome"/>
</dbReference>
<dbReference type="GO" id="GO:0005829">
    <property type="term" value="C:cytosol"/>
    <property type="evidence" value="ECO:0007669"/>
    <property type="project" value="TreeGrafter"/>
</dbReference>
<dbReference type="GO" id="GO:0005524">
    <property type="term" value="F:ATP binding"/>
    <property type="evidence" value="ECO:0007669"/>
    <property type="project" value="UniProtKB-UniRule"/>
</dbReference>
<dbReference type="GO" id="GO:0004370">
    <property type="term" value="F:glycerol kinase activity"/>
    <property type="evidence" value="ECO:0000250"/>
    <property type="project" value="UniProtKB"/>
</dbReference>
<dbReference type="GO" id="GO:0019563">
    <property type="term" value="P:glycerol catabolic process"/>
    <property type="evidence" value="ECO:0007669"/>
    <property type="project" value="UniProtKB-UniRule"/>
</dbReference>
<dbReference type="GO" id="GO:0006071">
    <property type="term" value="P:glycerol metabolic process"/>
    <property type="evidence" value="ECO:0000250"/>
    <property type="project" value="UniProtKB"/>
</dbReference>
<dbReference type="GO" id="GO:0006072">
    <property type="term" value="P:glycerol-3-phosphate metabolic process"/>
    <property type="evidence" value="ECO:0007669"/>
    <property type="project" value="InterPro"/>
</dbReference>
<dbReference type="CDD" id="cd07786">
    <property type="entry name" value="FGGY_EcGK_like"/>
    <property type="match status" value="1"/>
</dbReference>
<dbReference type="FunFam" id="3.30.420.40:FF:000007">
    <property type="entry name" value="Glycerol kinase"/>
    <property type="match status" value="1"/>
</dbReference>
<dbReference type="FunFam" id="3.30.420.40:FF:000008">
    <property type="entry name" value="Glycerol kinase"/>
    <property type="match status" value="1"/>
</dbReference>
<dbReference type="Gene3D" id="3.30.420.40">
    <property type="match status" value="2"/>
</dbReference>
<dbReference type="HAMAP" id="MF_00186">
    <property type="entry name" value="Glycerol_kin"/>
    <property type="match status" value="1"/>
</dbReference>
<dbReference type="InterPro" id="IPR043129">
    <property type="entry name" value="ATPase_NBD"/>
</dbReference>
<dbReference type="InterPro" id="IPR000577">
    <property type="entry name" value="Carb_kinase_FGGY"/>
</dbReference>
<dbReference type="InterPro" id="IPR018483">
    <property type="entry name" value="Carb_kinase_FGGY_CS"/>
</dbReference>
<dbReference type="InterPro" id="IPR018485">
    <property type="entry name" value="FGGY_C"/>
</dbReference>
<dbReference type="InterPro" id="IPR018484">
    <property type="entry name" value="FGGY_N"/>
</dbReference>
<dbReference type="InterPro" id="IPR005999">
    <property type="entry name" value="Glycerol_kin"/>
</dbReference>
<dbReference type="NCBIfam" id="TIGR01311">
    <property type="entry name" value="glycerol_kin"/>
    <property type="match status" value="1"/>
</dbReference>
<dbReference type="NCBIfam" id="NF000756">
    <property type="entry name" value="PRK00047.1"/>
    <property type="match status" value="1"/>
</dbReference>
<dbReference type="PANTHER" id="PTHR10196:SF69">
    <property type="entry name" value="GLYCEROL KINASE"/>
    <property type="match status" value="1"/>
</dbReference>
<dbReference type="PANTHER" id="PTHR10196">
    <property type="entry name" value="SUGAR KINASE"/>
    <property type="match status" value="1"/>
</dbReference>
<dbReference type="Pfam" id="PF02782">
    <property type="entry name" value="FGGY_C"/>
    <property type="match status" value="1"/>
</dbReference>
<dbReference type="Pfam" id="PF00370">
    <property type="entry name" value="FGGY_N"/>
    <property type="match status" value="1"/>
</dbReference>
<dbReference type="PIRSF" id="PIRSF000538">
    <property type="entry name" value="GlpK"/>
    <property type="match status" value="1"/>
</dbReference>
<dbReference type="SUPFAM" id="SSF53067">
    <property type="entry name" value="Actin-like ATPase domain"/>
    <property type="match status" value="2"/>
</dbReference>
<dbReference type="PROSITE" id="PS00933">
    <property type="entry name" value="FGGY_KINASES_1"/>
    <property type="match status" value="1"/>
</dbReference>
<dbReference type="PROSITE" id="PS00445">
    <property type="entry name" value="FGGY_KINASES_2"/>
    <property type="match status" value="1"/>
</dbReference>
<keyword id="KW-0067">ATP-binding</keyword>
<keyword id="KW-0319">Glycerol metabolism</keyword>
<keyword id="KW-0418">Kinase</keyword>
<keyword id="KW-0547">Nucleotide-binding</keyword>
<keyword id="KW-1185">Reference proteome</keyword>
<keyword id="KW-0808">Transferase</keyword>
<sequence length="498" mass="54170">MEYLLALDQGTSSSRAIVFNRAGQIVASAQQEFPQHFPQPGWVEHDPLDIWSSQLATCRAALEQARLGAADMAALGITNQRETTVVWERATGRPIFNAIVWQDRRTEAICERLRAEGLEDEVRKRTGLVIDPYFSGTKLRWILDHVDGARERAARGELAFGTIDSWLVWQLTRGRLHVTDVSNASRTLLWNIHTGQWDADLMRALDIHPSLLPEVHPSAHRFGQTDADWLGAPLTIGGIAGDQQSALFGQACFKPGMAKNTYGTGCFMLLNTGERAVESRNGLISTAACQSGSRRSYALEGSVFVGGAVVQWLRDGLRAIQRSADVEGLAASVPDSGGVVFVPSFTGLGAPYWDPTAQGAIVGLSRGTTIGHIARAALESIAFQSTALLQAMTRDAVSAITELRVDGGASANNLLLQFQADLLGIPVVRPEIIETTALGAAYLAGIATGFYRSEDEVARQWRASRTFHPVISRDEAQHRMAQWEMAVAQVRLPTTHGH</sequence>
<feature type="chain" id="PRO_0000059481" description="Glycerol kinase">
    <location>
        <begin position="1"/>
        <end position="498"/>
    </location>
</feature>
<feature type="binding site" evidence="1">
    <location>
        <position position="11"/>
    </location>
    <ligand>
        <name>ADP</name>
        <dbReference type="ChEBI" id="CHEBI:456216"/>
    </ligand>
</feature>
<feature type="binding site" evidence="1">
    <location>
        <position position="11"/>
    </location>
    <ligand>
        <name>ATP</name>
        <dbReference type="ChEBI" id="CHEBI:30616"/>
    </ligand>
</feature>
<feature type="binding site" evidence="1">
    <location>
        <position position="11"/>
    </location>
    <ligand>
        <name>sn-glycerol 3-phosphate</name>
        <dbReference type="ChEBI" id="CHEBI:57597"/>
    </ligand>
</feature>
<feature type="binding site" evidence="1">
    <location>
        <position position="12"/>
    </location>
    <ligand>
        <name>ATP</name>
        <dbReference type="ChEBI" id="CHEBI:30616"/>
    </ligand>
</feature>
<feature type="binding site" evidence="1">
    <location>
        <position position="13"/>
    </location>
    <ligand>
        <name>ATP</name>
        <dbReference type="ChEBI" id="CHEBI:30616"/>
    </ligand>
</feature>
<feature type="binding site" evidence="1">
    <location>
        <position position="15"/>
    </location>
    <ligand>
        <name>ADP</name>
        <dbReference type="ChEBI" id="CHEBI:456216"/>
    </ligand>
</feature>
<feature type="binding site" evidence="1">
    <location>
        <position position="81"/>
    </location>
    <ligand>
        <name>glycerol</name>
        <dbReference type="ChEBI" id="CHEBI:17754"/>
    </ligand>
</feature>
<feature type="binding site" evidence="1">
    <location>
        <position position="81"/>
    </location>
    <ligand>
        <name>sn-glycerol 3-phosphate</name>
        <dbReference type="ChEBI" id="CHEBI:57597"/>
    </ligand>
</feature>
<feature type="binding site" evidence="1">
    <location>
        <position position="82"/>
    </location>
    <ligand>
        <name>glycerol</name>
        <dbReference type="ChEBI" id="CHEBI:17754"/>
    </ligand>
</feature>
<feature type="binding site" evidence="1">
    <location>
        <position position="82"/>
    </location>
    <ligand>
        <name>sn-glycerol 3-phosphate</name>
        <dbReference type="ChEBI" id="CHEBI:57597"/>
    </ligand>
</feature>
<feature type="binding site" evidence="1">
    <location>
        <position position="133"/>
    </location>
    <ligand>
        <name>glycerol</name>
        <dbReference type="ChEBI" id="CHEBI:17754"/>
    </ligand>
</feature>
<feature type="binding site" evidence="1">
    <location>
        <position position="133"/>
    </location>
    <ligand>
        <name>sn-glycerol 3-phosphate</name>
        <dbReference type="ChEBI" id="CHEBI:57597"/>
    </ligand>
</feature>
<feature type="binding site" evidence="1">
    <location>
        <position position="242"/>
    </location>
    <ligand>
        <name>glycerol</name>
        <dbReference type="ChEBI" id="CHEBI:17754"/>
    </ligand>
</feature>
<feature type="binding site" evidence="1">
    <location>
        <position position="242"/>
    </location>
    <ligand>
        <name>sn-glycerol 3-phosphate</name>
        <dbReference type="ChEBI" id="CHEBI:57597"/>
    </ligand>
</feature>
<feature type="binding site" evidence="1">
    <location>
        <position position="243"/>
    </location>
    <ligand>
        <name>glycerol</name>
        <dbReference type="ChEBI" id="CHEBI:17754"/>
    </ligand>
</feature>
<feature type="binding site" evidence="1">
    <location>
        <position position="264"/>
    </location>
    <ligand>
        <name>ADP</name>
        <dbReference type="ChEBI" id="CHEBI:456216"/>
    </ligand>
</feature>
<feature type="binding site" evidence="1">
    <location>
        <position position="264"/>
    </location>
    <ligand>
        <name>ATP</name>
        <dbReference type="ChEBI" id="CHEBI:30616"/>
    </ligand>
</feature>
<feature type="binding site" evidence="1">
    <location>
        <position position="307"/>
    </location>
    <ligand>
        <name>ADP</name>
        <dbReference type="ChEBI" id="CHEBI:456216"/>
    </ligand>
</feature>
<feature type="binding site" evidence="1">
    <location>
        <position position="307"/>
    </location>
    <ligand>
        <name>ATP</name>
        <dbReference type="ChEBI" id="CHEBI:30616"/>
    </ligand>
</feature>
<feature type="binding site" evidence="1">
    <location>
        <position position="311"/>
    </location>
    <ligand>
        <name>ATP</name>
        <dbReference type="ChEBI" id="CHEBI:30616"/>
    </ligand>
</feature>
<feature type="binding site" evidence="1">
    <location>
        <position position="408"/>
    </location>
    <ligand>
        <name>ADP</name>
        <dbReference type="ChEBI" id="CHEBI:456216"/>
    </ligand>
</feature>
<feature type="binding site" evidence="1">
    <location>
        <position position="408"/>
    </location>
    <ligand>
        <name>ATP</name>
        <dbReference type="ChEBI" id="CHEBI:30616"/>
    </ligand>
</feature>
<feature type="binding site" evidence="1">
    <location>
        <position position="412"/>
    </location>
    <ligand>
        <name>ADP</name>
        <dbReference type="ChEBI" id="CHEBI:456216"/>
    </ligand>
</feature>
<reference key="1">
    <citation type="journal article" date="2002" name="Nature">
        <title>Genome sequence of the plant pathogen Ralstonia solanacearum.</title>
        <authorList>
            <person name="Salanoubat M."/>
            <person name="Genin S."/>
            <person name="Artiguenave F."/>
            <person name="Gouzy J."/>
            <person name="Mangenot S."/>
            <person name="Arlat M."/>
            <person name="Billault A."/>
            <person name="Brottier P."/>
            <person name="Camus J.-C."/>
            <person name="Cattolico L."/>
            <person name="Chandler M."/>
            <person name="Choisne N."/>
            <person name="Claudel-Renard C."/>
            <person name="Cunnac S."/>
            <person name="Demange N."/>
            <person name="Gaspin C."/>
            <person name="Lavie M."/>
            <person name="Moisan A."/>
            <person name="Robert C."/>
            <person name="Saurin W."/>
            <person name="Schiex T."/>
            <person name="Siguier P."/>
            <person name="Thebault P."/>
            <person name="Whalen M."/>
            <person name="Wincker P."/>
            <person name="Levy M."/>
            <person name="Weissenbach J."/>
            <person name="Boucher C.A."/>
        </authorList>
    </citation>
    <scope>NUCLEOTIDE SEQUENCE [LARGE SCALE GENOMIC DNA]</scope>
    <source>
        <strain>ATCC BAA-1114 / GMI1000</strain>
    </source>
</reference>
<proteinExistence type="inferred from homology"/>
<evidence type="ECO:0000255" key="1">
    <source>
        <dbReference type="HAMAP-Rule" id="MF_00186"/>
    </source>
</evidence>
<comment type="function">
    <text evidence="1">Key enzyme in the regulation of glycerol uptake and metabolism. Catalyzes the phosphorylation of glycerol to yield sn-glycerol 3-phosphate.</text>
</comment>
<comment type="catalytic activity">
    <reaction evidence="1">
        <text>glycerol + ATP = sn-glycerol 3-phosphate + ADP + H(+)</text>
        <dbReference type="Rhea" id="RHEA:21644"/>
        <dbReference type="ChEBI" id="CHEBI:15378"/>
        <dbReference type="ChEBI" id="CHEBI:17754"/>
        <dbReference type="ChEBI" id="CHEBI:30616"/>
        <dbReference type="ChEBI" id="CHEBI:57597"/>
        <dbReference type="ChEBI" id="CHEBI:456216"/>
        <dbReference type="EC" id="2.7.1.30"/>
    </reaction>
</comment>
<comment type="activity regulation">
    <text evidence="1">Inhibited by fructose 1,6-bisphosphate (FBP).</text>
</comment>
<comment type="pathway">
    <text evidence="1">Polyol metabolism; glycerol degradation via glycerol kinase pathway; sn-glycerol 3-phosphate from glycerol: step 1/1.</text>
</comment>
<comment type="similarity">
    <text evidence="1">Belongs to the FGGY kinase family.</text>
</comment>
<name>GLPK_RALN1</name>
<accession>Q8XUY1</accession>
<gene>
    <name evidence="1" type="primary">glpK</name>
    <name type="ordered locus">RSc3052</name>
    <name type="ORF">RS00495</name>
</gene>